<keyword id="KW-1003">Cell membrane</keyword>
<keyword id="KW-0472">Membrane</keyword>
<keyword id="KW-0653">Protein transport</keyword>
<keyword id="KW-0811">Translocation</keyword>
<keyword id="KW-0812">Transmembrane</keyword>
<keyword id="KW-1133">Transmembrane helix</keyword>
<keyword id="KW-0813">Transport</keyword>
<name>TATA_SALAI</name>
<evidence type="ECO:0000255" key="1">
    <source>
        <dbReference type="HAMAP-Rule" id="MF_00236"/>
    </source>
</evidence>
<evidence type="ECO:0000256" key="2">
    <source>
        <dbReference type="SAM" id="MobiDB-lite"/>
    </source>
</evidence>
<accession>A8M2B2</accession>
<gene>
    <name evidence="1" type="primary">tatA</name>
    <name type="ordered locus">Sare_2370</name>
</gene>
<organism>
    <name type="scientific">Salinispora arenicola (strain CNS-205)</name>
    <dbReference type="NCBI Taxonomy" id="391037"/>
    <lineage>
        <taxon>Bacteria</taxon>
        <taxon>Bacillati</taxon>
        <taxon>Actinomycetota</taxon>
        <taxon>Actinomycetes</taxon>
        <taxon>Micromonosporales</taxon>
        <taxon>Micromonosporaceae</taxon>
        <taxon>Salinispora</taxon>
    </lineage>
</organism>
<sequence length="100" mass="11113">MGALKPWHIAVLVVVLILLFGAKRLPDAARSLGRSLRIIKAETKSLHDDDRDLAEKANAQAGYQPLPPQVQQEPYPQQTPYQAPPQQQPVVDPVQRARDS</sequence>
<reference key="1">
    <citation type="submission" date="2007-10" db="EMBL/GenBank/DDBJ databases">
        <title>Complete sequence of Salinispora arenicola CNS-205.</title>
        <authorList>
            <consortium name="US DOE Joint Genome Institute"/>
            <person name="Copeland A."/>
            <person name="Lucas S."/>
            <person name="Lapidus A."/>
            <person name="Barry K."/>
            <person name="Glavina del Rio T."/>
            <person name="Dalin E."/>
            <person name="Tice H."/>
            <person name="Pitluck S."/>
            <person name="Foster B."/>
            <person name="Schmutz J."/>
            <person name="Larimer F."/>
            <person name="Land M."/>
            <person name="Hauser L."/>
            <person name="Kyrpides N."/>
            <person name="Ivanova N."/>
            <person name="Jensen P.R."/>
            <person name="Moore B.S."/>
            <person name="Penn K."/>
            <person name="Jenkins C."/>
            <person name="Udwary D."/>
            <person name="Xiang L."/>
            <person name="Gontang E."/>
            <person name="Richardson P."/>
        </authorList>
    </citation>
    <scope>NUCLEOTIDE SEQUENCE [LARGE SCALE GENOMIC DNA]</scope>
    <source>
        <strain>CNS-205</strain>
    </source>
</reference>
<dbReference type="EMBL" id="CP000850">
    <property type="protein sequence ID" value="ABV98228.1"/>
    <property type="molecule type" value="Genomic_DNA"/>
</dbReference>
<dbReference type="SMR" id="A8M2B2"/>
<dbReference type="STRING" id="391037.Sare_2370"/>
<dbReference type="KEGG" id="saq:Sare_2370"/>
<dbReference type="PATRIC" id="fig|391037.6.peg.2403"/>
<dbReference type="eggNOG" id="COG1826">
    <property type="taxonomic scope" value="Bacteria"/>
</dbReference>
<dbReference type="HOGENOM" id="CLU_086034_4_0_11"/>
<dbReference type="OrthoDB" id="5245163at2"/>
<dbReference type="GO" id="GO:0033281">
    <property type="term" value="C:TAT protein transport complex"/>
    <property type="evidence" value="ECO:0007669"/>
    <property type="project" value="UniProtKB-UniRule"/>
</dbReference>
<dbReference type="GO" id="GO:0008320">
    <property type="term" value="F:protein transmembrane transporter activity"/>
    <property type="evidence" value="ECO:0007669"/>
    <property type="project" value="UniProtKB-UniRule"/>
</dbReference>
<dbReference type="GO" id="GO:0043953">
    <property type="term" value="P:protein transport by the Tat complex"/>
    <property type="evidence" value="ECO:0007669"/>
    <property type="project" value="UniProtKB-UniRule"/>
</dbReference>
<dbReference type="Gene3D" id="1.20.5.3310">
    <property type="match status" value="1"/>
</dbReference>
<dbReference type="HAMAP" id="MF_00236">
    <property type="entry name" value="TatA_E"/>
    <property type="match status" value="1"/>
</dbReference>
<dbReference type="InterPro" id="IPR003369">
    <property type="entry name" value="TatA/B/E"/>
</dbReference>
<dbReference type="InterPro" id="IPR006312">
    <property type="entry name" value="TatA/E"/>
</dbReference>
<dbReference type="NCBIfam" id="NF001854">
    <property type="entry name" value="PRK00575.1"/>
    <property type="match status" value="1"/>
</dbReference>
<dbReference type="PANTHER" id="PTHR42982">
    <property type="entry name" value="SEC-INDEPENDENT PROTEIN TRANSLOCASE PROTEIN TATA"/>
    <property type="match status" value="1"/>
</dbReference>
<dbReference type="PANTHER" id="PTHR42982:SF8">
    <property type="entry name" value="SEC-INDEPENDENT PROTEIN TRANSLOCASE PROTEIN TATA"/>
    <property type="match status" value="1"/>
</dbReference>
<dbReference type="Pfam" id="PF02416">
    <property type="entry name" value="TatA_B_E"/>
    <property type="match status" value="1"/>
</dbReference>
<protein>
    <recommendedName>
        <fullName evidence="1">Sec-independent protein translocase protein TatA</fullName>
    </recommendedName>
</protein>
<comment type="function">
    <text evidence="1">Part of the twin-arginine translocation (Tat) system that transports large folded proteins containing a characteristic twin-arginine motif in their signal peptide across membranes. TatA could form the protein-conducting channel of the Tat system.</text>
</comment>
<comment type="subunit">
    <text evidence="1">The Tat system comprises two distinct complexes: a TatABC complex, containing multiple copies of TatA, TatB and TatC subunits, and a separate TatA complex, containing only TatA subunits. Substrates initially bind to the TatABC complex, which probably triggers association of the separate TatA complex to form the active translocon.</text>
</comment>
<comment type="subcellular location">
    <subcellularLocation>
        <location evidence="1">Cell membrane</location>
        <topology evidence="1">Single-pass membrane protein</topology>
    </subcellularLocation>
</comment>
<comment type="similarity">
    <text evidence="1">Belongs to the TatA/E family.</text>
</comment>
<proteinExistence type="inferred from homology"/>
<feature type="chain" id="PRO_1000078317" description="Sec-independent protein translocase protein TatA">
    <location>
        <begin position="1"/>
        <end position="100"/>
    </location>
</feature>
<feature type="transmembrane region" description="Helical" evidence="1">
    <location>
        <begin position="1"/>
        <end position="21"/>
    </location>
</feature>
<feature type="region of interest" description="Disordered" evidence="2">
    <location>
        <begin position="44"/>
        <end position="100"/>
    </location>
</feature>
<feature type="compositionally biased region" description="Basic and acidic residues" evidence="2">
    <location>
        <begin position="44"/>
        <end position="55"/>
    </location>
</feature>
<feature type="compositionally biased region" description="Low complexity" evidence="2">
    <location>
        <begin position="69"/>
        <end position="81"/>
    </location>
</feature>